<protein>
    <recommendedName>
        <fullName>Growth hormone-inducible transmembrane protein</fullName>
    </recommendedName>
    <alternativeName>
        <fullName>Mitochondrial morphology and cristae structure 1</fullName>
        <shortName>MICS1</shortName>
    </alternativeName>
</protein>
<dbReference type="EMBL" id="AF412297">
    <property type="protein sequence ID" value="AAL07803.1"/>
    <property type="molecule type" value="mRNA"/>
</dbReference>
<dbReference type="EMBL" id="AK093887">
    <property type="protein sequence ID" value="BAC04243.1"/>
    <property type="molecule type" value="mRNA"/>
</dbReference>
<dbReference type="EMBL" id="AK134592">
    <property type="protein sequence ID" value="BAE22197.1"/>
    <property type="molecule type" value="mRNA"/>
</dbReference>
<dbReference type="EMBL" id="AK146433">
    <property type="protein sequence ID" value="BAE27167.1"/>
    <property type="molecule type" value="mRNA"/>
</dbReference>
<dbReference type="EMBL" id="AK146853">
    <property type="protein sequence ID" value="BAE27483.1"/>
    <property type="molecule type" value="mRNA"/>
</dbReference>
<dbReference type="EMBL" id="AK151488">
    <property type="protein sequence ID" value="BAE30441.1"/>
    <property type="molecule type" value="mRNA"/>
</dbReference>
<dbReference type="EMBL" id="AK158904">
    <property type="protein sequence ID" value="BAE34723.1"/>
    <property type="molecule type" value="mRNA"/>
</dbReference>
<dbReference type="EMBL" id="AK159695">
    <property type="protein sequence ID" value="BAE35295.1"/>
    <property type="molecule type" value="mRNA"/>
</dbReference>
<dbReference type="EMBL" id="AK159724">
    <property type="protein sequence ID" value="BAE35319.1"/>
    <property type="molecule type" value="mRNA"/>
</dbReference>
<dbReference type="EMBL" id="AK164122">
    <property type="protein sequence ID" value="BAE37638.1"/>
    <property type="molecule type" value="mRNA"/>
</dbReference>
<dbReference type="EMBL" id="AK167970">
    <property type="protein sequence ID" value="BAE39965.1"/>
    <property type="molecule type" value="mRNA"/>
</dbReference>
<dbReference type="EMBL" id="AK168022">
    <property type="protein sequence ID" value="BAE40007.1"/>
    <property type="molecule type" value="mRNA"/>
</dbReference>
<dbReference type="EMBL" id="AK168678">
    <property type="protein sequence ID" value="BAE40527.1"/>
    <property type="molecule type" value="mRNA"/>
</dbReference>
<dbReference type="EMBL" id="AK168800">
    <property type="protein sequence ID" value="BAE40631.1"/>
    <property type="molecule type" value="mRNA"/>
</dbReference>
<dbReference type="EMBL" id="BC008622">
    <property type="protein sequence ID" value="AAH08622.1"/>
    <property type="molecule type" value="mRNA"/>
</dbReference>
<dbReference type="EMBL" id="BC010224">
    <property type="protein sequence ID" value="AAH10224.1"/>
    <property type="molecule type" value="mRNA"/>
</dbReference>
<dbReference type="CCDS" id="CCDS26953.1"/>
<dbReference type="RefSeq" id="NP_001186051.1">
    <property type="nucleotide sequence ID" value="NM_001199122.1"/>
</dbReference>
<dbReference type="RefSeq" id="NP_001346831.1">
    <property type="nucleotide sequence ID" value="NM_001359902.1"/>
</dbReference>
<dbReference type="RefSeq" id="NP_510963.1">
    <property type="nucleotide sequence ID" value="NM_078478.5"/>
</dbReference>
<dbReference type="RefSeq" id="XP_006519435.1">
    <property type="nucleotide sequence ID" value="XM_006519372.3"/>
</dbReference>
<dbReference type="BioGRID" id="211209">
    <property type="interactions" value="1"/>
</dbReference>
<dbReference type="FunCoup" id="Q91VC9">
    <property type="interactions" value="1121"/>
</dbReference>
<dbReference type="IntAct" id="Q91VC9">
    <property type="interactions" value="1"/>
</dbReference>
<dbReference type="STRING" id="10090.ENSMUSP00000129712"/>
<dbReference type="PhosphoSitePlus" id="Q91VC9"/>
<dbReference type="SwissPalm" id="Q91VC9"/>
<dbReference type="jPOST" id="Q91VC9"/>
<dbReference type="PaxDb" id="10090-ENSMUSP00000046212"/>
<dbReference type="PeptideAtlas" id="Q91VC9"/>
<dbReference type="ProteomicsDB" id="268878"/>
<dbReference type="Pumba" id="Q91VC9"/>
<dbReference type="Antibodypedia" id="8062">
    <property type="antibodies" value="232 antibodies from 32 providers"/>
</dbReference>
<dbReference type="DNASU" id="66092"/>
<dbReference type="Ensembl" id="ENSMUST00000042564.17">
    <property type="protein sequence ID" value="ENSMUSP00000046212.10"/>
    <property type="gene ID" value="ENSMUSG00000041028.17"/>
</dbReference>
<dbReference type="Ensembl" id="ENSMUST00000165649.4">
    <property type="protein sequence ID" value="ENSMUSP00000129712.3"/>
    <property type="gene ID" value="ENSMUSG00000041028.17"/>
</dbReference>
<dbReference type="GeneID" id="66092"/>
<dbReference type="KEGG" id="mmu:66092"/>
<dbReference type="UCSC" id="uc007tbx.3">
    <property type="organism name" value="mouse"/>
</dbReference>
<dbReference type="AGR" id="MGI:1913342"/>
<dbReference type="CTD" id="27069"/>
<dbReference type="MGI" id="MGI:1913342">
    <property type="gene designation" value="Ghitm"/>
</dbReference>
<dbReference type="VEuPathDB" id="HostDB:ENSMUSG00000041028"/>
<dbReference type="eggNOG" id="KOG1630">
    <property type="taxonomic scope" value="Eukaryota"/>
</dbReference>
<dbReference type="GeneTree" id="ENSGT01050000244940"/>
<dbReference type="HOGENOM" id="CLU_050797_1_0_1"/>
<dbReference type="InParanoid" id="Q91VC9"/>
<dbReference type="OMA" id="TLMWSER"/>
<dbReference type="OrthoDB" id="6285520at2759"/>
<dbReference type="PhylomeDB" id="Q91VC9"/>
<dbReference type="TreeFam" id="TF314017"/>
<dbReference type="BioGRID-ORCS" id="66092">
    <property type="hits" value="4 hits in 77 CRISPR screens"/>
</dbReference>
<dbReference type="ChiTaRS" id="Ghitm">
    <property type="organism name" value="mouse"/>
</dbReference>
<dbReference type="PRO" id="PR:Q91VC9"/>
<dbReference type="Proteomes" id="UP000000589">
    <property type="component" value="Chromosome 14"/>
</dbReference>
<dbReference type="RNAct" id="Q91VC9">
    <property type="molecule type" value="protein"/>
</dbReference>
<dbReference type="Bgee" id="ENSMUSG00000041028">
    <property type="expression patterns" value="Expressed in blood and 280 other cell types or tissues"/>
</dbReference>
<dbReference type="ExpressionAtlas" id="Q91VC9">
    <property type="expression patterns" value="baseline and differential"/>
</dbReference>
<dbReference type="GO" id="GO:0005789">
    <property type="term" value="C:endoplasmic reticulum membrane"/>
    <property type="evidence" value="ECO:0007669"/>
    <property type="project" value="Ensembl"/>
</dbReference>
<dbReference type="GO" id="GO:0005743">
    <property type="term" value="C:mitochondrial inner membrane"/>
    <property type="evidence" value="ECO:0007669"/>
    <property type="project" value="UniProtKB-SubCell"/>
</dbReference>
<dbReference type="GO" id="GO:0005739">
    <property type="term" value="C:mitochondrion"/>
    <property type="evidence" value="ECO:0007005"/>
    <property type="project" value="MGI"/>
</dbReference>
<dbReference type="GO" id="GO:0015369">
    <property type="term" value="F:calcium:proton antiporter activity"/>
    <property type="evidence" value="ECO:0000250"/>
    <property type="project" value="UniProtKB"/>
</dbReference>
<dbReference type="GO" id="GO:0006915">
    <property type="term" value="P:apoptotic process"/>
    <property type="evidence" value="ECO:0007669"/>
    <property type="project" value="UniProtKB-KW"/>
</dbReference>
<dbReference type="GO" id="GO:0099093">
    <property type="term" value="P:calcium export from the mitochondrion"/>
    <property type="evidence" value="ECO:0000250"/>
    <property type="project" value="UniProtKB"/>
</dbReference>
<dbReference type="GO" id="GO:0007007">
    <property type="term" value="P:inner mitochondrial membrane organization"/>
    <property type="evidence" value="ECO:0000315"/>
    <property type="project" value="UniProtKB"/>
</dbReference>
<dbReference type="GO" id="GO:0006851">
    <property type="term" value="P:mitochondrial calcium ion transmembrane transport"/>
    <property type="evidence" value="ECO:0000250"/>
    <property type="project" value="UniProtKB"/>
</dbReference>
<dbReference type="GO" id="GO:0140141">
    <property type="term" value="P:mitochondrial potassium ion transmembrane transport"/>
    <property type="evidence" value="ECO:0000315"/>
    <property type="project" value="UniProtKB"/>
</dbReference>
<dbReference type="GO" id="GO:0090201">
    <property type="term" value="P:negative regulation of release of cytochrome c from mitochondria"/>
    <property type="evidence" value="ECO:0007669"/>
    <property type="project" value="Ensembl"/>
</dbReference>
<dbReference type="CDD" id="cd10431">
    <property type="entry name" value="GHITM"/>
    <property type="match status" value="1"/>
</dbReference>
<dbReference type="InterPro" id="IPR006214">
    <property type="entry name" value="Bax_inhibitor_1-related"/>
</dbReference>
<dbReference type="InterPro" id="IPR035871">
    <property type="entry name" value="GHITM"/>
</dbReference>
<dbReference type="PANTHER" id="PTHR23291">
    <property type="entry name" value="BAX INHIBITOR-RELATED"/>
    <property type="match status" value="1"/>
</dbReference>
<dbReference type="PANTHER" id="PTHR23291:SF112">
    <property type="entry name" value="GROWTH HORMONE-INDUCIBLE TRANSMEMBRANE PROTEIN"/>
    <property type="match status" value="1"/>
</dbReference>
<dbReference type="Pfam" id="PF01027">
    <property type="entry name" value="Bax1-I"/>
    <property type="match status" value="1"/>
</dbReference>
<feature type="transit peptide" description="Mitochondrion" evidence="5">
    <location>
        <begin position="1"/>
        <end position="45"/>
    </location>
</feature>
<feature type="chain" id="PRO_0000320076" description="Growth hormone-inducible transmembrane protein">
    <location>
        <begin position="46"/>
        <end position="346"/>
    </location>
</feature>
<feature type="topological domain" description="Mitochondrial matrix" evidence="2">
    <location>
        <begin position="46"/>
        <end position="83"/>
    </location>
</feature>
<feature type="transmembrane region" description="Helical" evidence="2">
    <location>
        <begin position="84"/>
        <end position="104"/>
    </location>
</feature>
<feature type="topological domain" description="Mitochondrial intermembrane" evidence="2">
    <location>
        <begin position="105"/>
        <end position="126"/>
    </location>
</feature>
<feature type="transmembrane region" description="Helical" evidence="2">
    <location>
        <begin position="127"/>
        <end position="147"/>
    </location>
</feature>
<feature type="topological domain" description="Mitochondrial matrix" evidence="2">
    <location>
        <begin position="148"/>
        <end position="160"/>
    </location>
</feature>
<feature type="transmembrane region" description="Helical" evidence="2">
    <location>
        <begin position="161"/>
        <end position="181"/>
    </location>
</feature>
<feature type="topological domain" description="Mitochondrial intermembrane" evidence="2">
    <location>
        <begin position="182"/>
        <end position="191"/>
    </location>
</feature>
<feature type="transmembrane region" description="Helical" evidence="2">
    <location>
        <begin position="192"/>
        <end position="212"/>
    </location>
</feature>
<feature type="topological domain" description="Mitochondrial matrix" evidence="2">
    <location>
        <begin position="213"/>
        <end position="214"/>
    </location>
</feature>
<feature type="transmembrane region" description="Helical" evidence="2">
    <location>
        <begin position="215"/>
        <end position="235"/>
    </location>
</feature>
<feature type="topological domain" description="Mitochondrial intermembrane" evidence="2">
    <location>
        <begin position="236"/>
        <end position="245"/>
    </location>
</feature>
<feature type="transmembrane region" description="Helical" evidence="2">
    <location>
        <begin position="246"/>
        <end position="266"/>
    </location>
</feature>
<feature type="topological domain" description="Mitochondrial matrix" evidence="2">
    <location>
        <begin position="267"/>
        <end position="272"/>
    </location>
</feature>
<feature type="transmembrane region" description="Helical" evidence="2">
    <location>
        <begin position="273"/>
        <end position="293"/>
    </location>
</feature>
<feature type="topological domain" description="Mitochondrial intermembrane" evidence="2">
    <location>
        <begin position="294"/>
        <end position="346"/>
    </location>
</feature>
<feature type="mutagenesis site" description="Impaired protein stability. Skeletal muscle mitochondria are swollen, exhibiting a disrupted cristae structure." evidence="4">
    <original>D</original>
    <variation>R</variation>
    <location>
        <position position="326"/>
    </location>
</feature>
<feature type="sequence conflict" description="In Ref. 2; BAE40631/BAE27483." evidence="5" ref="2">
    <original>E</original>
    <variation>K</variation>
    <location>
        <position position="73"/>
    </location>
</feature>
<feature type="sequence conflict" description="In Ref. 2; BAE30441." evidence="5" ref="2">
    <original>G</original>
    <variation>E</variation>
    <location>
        <position position="89"/>
    </location>
</feature>
<name>GHITM_MOUSE</name>
<gene>
    <name type="primary">Ghitm</name>
    <name type="synonym">Mics1</name>
</gene>
<keyword id="KW-0053">Apoptosis</keyword>
<keyword id="KW-0472">Membrane</keyword>
<keyword id="KW-0496">Mitochondrion</keyword>
<keyword id="KW-0999">Mitochondrion inner membrane</keyword>
<keyword id="KW-1185">Reference proteome</keyword>
<keyword id="KW-0809">Transit peptide</keyword>
<keyword id="KW-0812">Transmembrane</keyword>
<keyword id="KW-1133">Transmembrane helix</keyword>
<proteinExistence type="evidence at protein level"/>
<reference key="1">
    <citation type="journal article" date="2001" name="Endocrinology">
        <title>Identification, isolation, and cloning of growth hormone (GH)-inducible interscapular brown adipose complementary deoxyribonucleic acid from GH antagonist mice.</title>
        <authorList>
            <person name="Li Y."/>
            <person name="Kelder B."/>
            <person name="Kopchick J.J."/>
        </authorList>
    </citation>
    <scope>NUCLEOTIDE SEQUENCE [MRNA]</scope>
    <scope>INDUCTION</scope>
    <source>
        <strain>C57BL/6J</strain>
    </source>
</reference>
<reference key="2">
    <citation type="journal article" date="2005" name="Science">
        <title>The transcriptional landscape of the mammalian genome.</title>
        <authorList>
            <person name="Carninci P."/>
            <person name="Kasukawa T."/>
            <person name="Katayama S."/>
            <person name="Gough J."/>
            <person name="Frith M.C."/>
            <person name="Maeda N."/>
            <person name="Oyama R."/>
            <person name="Ravasi T."/>
            <person name="Lenhard B."/>
            <person name="Wells C."/>
            <person name="Kodzius R."/>
            <person name="Shimokawa K."/>
            <person name="Bajic V.B."/>
            <person name="Brenner S.E."/>
            <person name="Batalov S."/>
            <person name="Forrest A.R."/>
            <person name="Zavolan M."/>
            <person name="Davis M.J."/>
            <person name="Wilming L.G."/>
            <person name="Aidinis V."/>
            <person name="Allen J.E."/>
            <person name="Ambesi-Impiombato A."/>
            <person name="Apweiler R."/>
            <person name="Aturaliya R.N."/>
            <person name="Bailey T.L."/>
            <person name="Bansal M."/>
            <person name="Baxter L."/>
            <person name="Beisel K.W."/>
            <person name="Bersano T."/>
            <person name="Bono H."/>
            <person name="Chalk A.M."/>
            <person name="Chiu K.P."/>
            <person name="Choudhary V."/>
            <person name="Christoffels A."/>
            <person name="Clutterbuck D.R."/>
            <person name="Crowe M.L."/>
            <person name="Dalla E."/>
            <person name="Dalrymple B.P."/>
            <person name="de Bono B."/>
            <person name="Della Gatta G."/>
            <person name="di Bernardo D."/>
            <person name="Down T."/>
            <person name="Engstrom P."/>
            <person name="Fagiolini M."/>
            <person name="Faulkner G."/>
            <person name="Fletcher C.F."/>
            <person name="Fukushima T."/>
            <person name="Furuno M."/>
            <person name="Futaki S."/>
            <person name="Gariboldi M."/>
            <person name="Georgii-Hemming P."/>
            <person name="Gingeras T.R."/>
            <person name="Gojobori T."/>
            <person name="Green R.E."/>
            <person name="Gustincich S."/>
            <person name="Harbers M."/>
            <person name="Hayashi Y."/>
            <person name="Hensch T.K."/>
            <person name="Hirokawa N."/>
            <person name="Hill D."/>
            <person name="Huminiecki L."/>
            <person name="Iacono M."/>
            <person name="Ikeo K."/>
            <person name="Iwama A."/>
            <person name="Ishikawa T."/>
            <person name="Jakt M."/>
            <person name="Kanapin A."/>
            <person name="Katoh M."/>
            <person name="Kawasawa Y."/>
            <person name="Kelso J."/>
            <person name="Kitamura H."/>
            <person name="Kitano H."/>
            <person name="Kollias G."/>
            <person name="Krishnan S.P."/>
            <person name="Kruger A."/>
            <person name="Kummerfeld S.K."/>
            <person name="Kurochkin I.V."/>
            <person name="Lareau L.F."/>
            <person name="Lazarevic D."/>
            <person name="Lipovich L."/>
            <person name="Liu J."/>
            <person name="Liuni S."/>
            <person name="McWilliam S."/>
            <person name="Madan Babu M."/>
            <person name="Madera M."/>
            <person name="Marchionni L."/>
            <person name="Matsuda H."/>
            <person name="Matsuzawa S."/>
            <person name="Miki H."/>
            <person name="Mignone F."/>
            <person name="Miyake S."/>
            <person name="Morris K."/>
            <person name="Mottagui-Tabar S."/>
            <person name="Mulder N."/>
            <person name="Nakano N."/>
            <person name="Nakauchi H."/>
            <person name="Ng P."/>
            <person name="Nilsson R."/>
            <person name="Nishiguchi S."/>
            <person name="Nishikawa S."/>
            <person name="Nori F."/>
            <person name="Ohara O."/>
            <person name="Okazaki Y."/>
            <person name="Orlando V."/>
            <person name="Pang K.C."/>
            <person name="Pavan W.J."/>
            <person name="Pavesi G."/>
            <person name="Pesole G."/>
            <person name="Petrovsky N."/>
            <person name="Piazza S."/>
            <person name="Reed J."/>
            <person name="Reid J.F."/>
            <person name="Ring B.Z."/>
            <person name="Ringwald M."/>
            <person name="Rost B."/>
            <person name="Ruan Y."/>
            <person name="Salzberg S.L."/>
            <person name="Sandelin A."/>
            <person name="Schneider C."/>
            <person name="Schoenbach C."/>
            <person name="Sekiguchi K."/>
            <person name="Semple C.A."/>
            <person name="Seno S."/>
            <person name="Sessa L."/>
            <person name="Sheng Y."/>
            <person name="Shibata Y."/>
            <person name="Shimada H."/>
            <person name="Shimada K."/>
            <person name="Silva D."/>
            <person name="Sinclair B."/>
            <person name="Sperling S."/>
            <person name="Stupka E."/>
            <person name="Sugiura K."/>
            <person name="Sultana R."/>
            <person name="Takenaka Y."/>
            <person name="Taki K."/>
            <person name="Tammoja K."/>
            <person name="Tan S.L."/>
            <person name="Tang S."/>
            <person name="Taylor M.S."/>
            <person name="Tegner J."/>
            <person name="Teichmann S.A."/>
            <person name="Ueda H.R."/>
            <person name="van Nimwegen E."/>
            <person name="Verardo R."/>
            <person name="Wei C.L."/>
            <person name="Yagi K."/>
            <person name="Yamanishi H."/>
            <person name="Zabarovsky E."/>
            <person name="Zhu S."/>
            <person name="Zimmer A."/>
            <person name="Hide W."/>
            <person name="Bult C."/>
            <person name="Grimmond S.M."/>
            <person name="Teasdale R.D."/>
            <person name="Liu E.T."/>
            <person name="Brusic V."/>
            <person name="Quackenbush J."/>
            <person name="Wahlestedt C."/>
            <person name="Mattick J.S."/>
            <person name="Hume D.A."/>
            <person name="Kai C."/>
            <person name="Sasaki D."/>
            <person name="Tomaru Y."/>
            <person name="Fukuda S."/>
            <person name="Kanamori-Katayama M."/>
            <person name="Suzuki M."/>
            <person name="Aoki J."/>
            <person name="Arakawa T."/>
            <person name="Iida J."/>
            <person name="Imamura K."/>
            <person name="Itoh M."/>
            <person name="Kato T."/>
            <person name="Kawaji H."/>
            <person name="Kawagashira N."/>
            <person name="Kawashima T."/>
            <person name="Kojima M."/>
            <person name="Kondo S."/>
            <person name="Konno H."/>
            <person name="Nakano K."/>
            <person name="Ninomiya N."/>
            <person name="Nishio T."/>
            <person name="Okada M."/>
            <person name="Plessy C."/>
            <person name="Shibata K."/>
            <person name="Shiraki T."/>
            <person name="Suzuki S."/>
            <person name="Tagami M."/>
            <person name="Waki K."/>
            <person name="Watahiki A."/>
            <person name="Okamura-Oho Y."/>
            <person name="Suzuki H."/>
            <person name="Kawai J."/>
            <person name="Hayashizaki Y."/>
        </authorList>
    </citation>
    <scope>NUCLEOTIDE SEQUENCE [LARGE SCALE MRNA]</scope>
    <source>
        <strain>BALB/cJ</strain>
        <strain>C57BL/6J</strain>
        <strain>DBA/2J</strain>
        <tissue>Amnion</tissue>
        <tissue>Bone marrow</tissue>
        <tissue>Heart</tissue>
        <tissue>Medulla oblongata</tissue>
        <tissue>Spinal cord</tissue>
        <tissue>Visual cortex</tissue>
    </source>
</reference>
<reference key="3">
    <citation type="journal article" date="2004" name="Genome Res.">
        <title>The status, quality, and expansion of the NIH full-length cDNA project: the Mammalian Gene Collection (MGC).</title>
        <authorList>
            <consortium name="The MGC Project Team"/>
        </authorList>
    </citation>
    <scope>NUCLEOTIDE SEQUENCE [LARGE SCALE MRNA]</scope>
    <source>
        <strain>Czech II</strain>
        <strain>FVB/N</strain>
        <tissue>Mammary tumor</tissue>
    </source>
</reference>
<reference key="4">
    <citation type="journal article" date="2010" name="Cell">
        <title>A tissue-specific atlas of mouse protein phosphorylation and expression.</title>
        <authorList>
            <person name="Huttlin E.L."/>
            <person name="Jedrychowski M.P."/>
            <person name="Elias J.E."/>
            <person name="Goswami T."/>
            <person name="Rad R."/>
            <person name="Beausoleil S.A."/>
            <person name="Villen J."/>
            <person name="Haas W."/>
            <person name="Sowa M.E."/>
            <person name="Gygi S.P."/>
        </authorList>
    </citation>
    <scope>IDENTIFICATION BY MASS SPECTROMETRY [LARGE SCALE ANALYSIS]</scope>
    <source>
        <tissue>Brown adipose tissue</tissue>
        <tissue>Heart</tissue>
        <tissue>Kidney</tissue>
        <tissue>Liver</tissue>
    </source>
</reference>
<reference key="5">
    <citation type="journal article" date="2022" name="Life. Sci Alliance">
        <title>TMBIM5 loss of function alters mitochondrial matrix ion homeostasis and causes a skeletal myopathy.</title>
        <authorList>
            <person name="Zhang L."/>
            <person name="Dietsche F."/>
            <person name="Seitaj B."/>
            <person name="Rojas-Charry L."/>
            <person name="Latchman N."/>
            <person name="Tomar D."/>
            <person name="Wuest R.C."/>
            <person name="Nickel A."/>
            <person name="Frauenknecht K.B."/>
            <person name="Schoser B."/>
            <person name="Schumann S."/>
            <person name="Schmeisser M.J."/>
            <person name="Vom Berg J."/>
            <person name="Buch T."/>
            <person name="Finger S."/>
            <person name="Wenzel P."/>
            <person name="Maack C."/>
            <person name="Elrod J.W."/>
            <person name="Parys J.B."/>
            <person name="Bultynck G."/>
            <person name="Methner A."/>
        </authorList>
    </citation>
    <scope>FUNCTION</scope>
    <scope>TRANSPORTER ACTIVITY</scope>
    <scope>MUTAGENESIS OF ASP-326</scope>
</reference>
<organism>
    <name type="scientific">Mus musculus</name>
    <name type="common">Mouse</name>
    <dbReference type="NCBI Taxonomy" id="10090"/>
    <lineage>
        <taxon>Eukaryota</taxon>
        <taxon>Metazoa</taxon>
        <taxon>Chordata</taxon>
        <taxon>Craniata</taxon>
        <taxon>Vertebrata</taxon>
        <taxon>Euteleostomi</taxon>
        <taxon>Mammalia</taxon>
        <taxon>Eutheria</taxon>
        <taxon>Euarchontoglires</taxon>
        <taxon>Glires</taxon>
        <taxon>Rodentia</taxon>
        <taxon>Myomorpha</taxon>
        <taxon>Muroidea</taxon>
        <taxon>Muridae</taxon>
        <taxon>Murinae</taxon>
        <taxon>Mus</taxon>
        <taxon>Mus</taxon>
    </lineage>
</organism>
<comment type="function">
    <text evidence="1 4">Plays an important role in maintenance of mitochondrial morphology and in mediating either calcium or potassium/proton antiport (PubMed:35715207). Mediates proton-dependent calcium efflux from mitochondrion (By similarity). Also functions as an electroneutral mitochondrial proton/potassium exchanger (PubMed:35715207). Required for the mitochondrial tubular network and cristae organization (PubMed:35715207). Involved in apoptotic release of cytochrome c (By similarity). Inhibits AFG3L2 proteolytic activity, stimulating respiration and stabilizing respiratory enzymes in actively respiring mitochondria (By similarity). However, when mitochondria become hyperpolarized, GHITM loses its inhibitory activity toward AFG3L2 and the now active AFG3L2 turns first on GHITM and, if hyperpolarization persists, on other proteins of the mitochondria, leading to a broad remodeling of the mitochondrial proteome (By similarity).</text>
</comment>
<comment type="catalytic activity">
    <reaction evidence="1">
        <text>Ca(2+)(in) + 2 H(+)(out) = Ca(2+)(out) + 2 H(+)(in)</text>
        <dbReference type="Rhea" id="RHEA:72199"/>
        <dbReference type="ChEBI" id="CHEBI:15378"/>
        <dbReference type="ChEBI" id="CHEBI:29108"/>
    </reaction>
</comment>
<comment type="catalytic activity">
    <reaction evidence="4">
        <text>K(+)(in) + H(+)(out) = K(+)(out) + H(+)(in)</text>
        <dbReference type="Rhea" id="RHEA:29467"/>
        <dbReference type="ChEBI" id="CHEBI:15378"/>
        <dbReference type="ChEBI" id="CHEBI:29103"/>
    </reaction>
</comment>
<comment type="subunit">
    <text evidence="1">Interacts with LETM1 and AFG3L2.</text>
</comment>
<comment type="subcellular location">
    <subcellularLocation>
        <location evidence="1">Mitochondrion inner membrane</location>
        <topology evidence="2">Multi-pass membrane protein</topology>
    </subcellularLocation>
</comment>
<comment type="induction">
    <text evidence="3">By growth hormone.</text>
</comment>
<comment type="PTM">
    <text evidence="1">Undergoes AFG3L2-mediated proteolytic degradation, upon hyperpolarization of mitochondria.</text>
</comment>
<comment type="similarity">
    <text evidence="5">Belongs to the BI1 family.</text>
</comment>
<accession>Q91VC9</accession>
<accession>Q3TGB7</accession>
<accession>Q3UA74</accession>
<accession>Q8N9T5</accession>
<sequence length="346" mass="37275">MLAARLVCLRTLPSRVFQPTFITKASPLVKNSITKNQWLVTPSREYATKTRIRTHRGKTGQELKEAALEPSMEKIFKIDQMGRWFVAGGAAVGLGALCYYGLGMSNEIGAIEKAVIWPQYVKDRIHSTYMYLAGSIGLTALSALAVARTPALMNFMMTGSWVTIGATFAAMIGAGMLVHSISYEQSPGPKHLAWMLHSGVMGAVVAPLTILGGPLLLRAAWYTAGIVGGLSTVAMCAPSEKFLNMGAPLGVGLGLVFASSLGSMFLPPTSVAGATLYSVAMYGGLVLFSMFLLYDTQKVIKRAEITPMYGAQKYDPINSMLTIYMDTLNIFMRVATMLATGSNRKK</sequence>
<evidence type="ECO:0000250" key="1">
    <source>
        <dbReference type="UniProtKB" id="Q9H3K2"/>
    </source>
</evidence>
<evidence type="ECO:0000255" key="2"/>
<evidence type="ECO:0000269" key="3">
    <source>
    </source>
</evidence>
<evidence type="ECO:0000269" key="4">
    <source>
    </source>
</evidence>
<evidence type="ECO:0000305" key="5"/>